<sequence length="124" mass="14204">MARLSGVDLPREKRMEIALTYIYGIGRTRSKEILDATGVSPDLRSKDLSDEDLAKLREYIEESLKVEGDLRREVQADIRRKIEIGCYQGLRHRRGLPVRGQRTKTNARTRKGPKRTIAGKKKAK</sequence>
<reference key="1">
    <citation type="submission" date="2005-03" db="EMBL/GenBank/DDBJ databases">
        <title>Comparison of the complete genome sequences of Rhodococcus erythropolis PR4 and Rhodococcus opacus B4.</title>
        <authorList>
            <person name="Takarada H."/>
            <person name="Sekine M."/>
            <person name="Hosoyama A."/>
            <person name="Yamada R."/>
            <person name="Fujisawa T."/>
            <person name="Omata S."/>
            <person name="Shimizu A."/>
            <person name="Tsukatani N."/>
            <person name="Tanikawa S."/>
            <person name="Fujita N."/>
            <person name="Harayama S."/>
        </authorList>
    </citation>
    <scope>NUCLEOTIDE SEQUENCE [LARGE SCALE GENOMIC DNA]</scope>
    <source>
        <strain>PR4 / NBRC 100887</strain>
    </source>
</reference>
<dbReference type="EMBL" id="AP008957">
    <property type="protein sequence ID" value="BAH32586.1"/>
    <property type="molecule type" value="Genomic_DNA"/>
</dbReference>
<dbReference type="RefSeq" id="WP_003940834.1">
    <property type="nucleotide sequence ID" value="NC_012490.1"/>
</dbReference>
<dbReference type="SMR" id="C0ZW51"/>
<dbReference type="GeneID" id="93803279"/>
<dbReference type="KEGG" id="rer:RER_18780"/>
<dbReference type="eggNOG" id="COG0099">
    <property type="taxonomic scope" value="Bacteria"/>
</dbReference>
<dbReference type="HOGENOM" id="CLU_103849_1_2_11"/>
<dbReference type="Proteomes" id="UP000002204">
    <property type="component" value="Chromosome"/>
</dbReference>
<dbReference type="GO" id="GO:0005829">
    <property type="term" value="C:cytosol"/>
    <property type="evidence" value="ECO:0007669"/>
    <property type="project" value="TreeGrafter"/>
</dbReference>
<dbReference type="GO" id="GO:0015935">
    <property type="term" value="C:small ribosomal subunit"/>
    <property type="evidence" value="ECO:0007669"/>
    <property type="project" value="TreeGrafter"/>
</dbReference>
<dbReference type="GO" id="GO:0019843">
    <property type="term" value="F:rRNA binding"/>
    <property type="evidence" value="ECO:0007669"/>
    <property type="project" value="UniProtKB-UniRule"/>
</dbReference>
<dbReference type="GO" id="GO:0003735">
    <property type="term" value="F:structural constituent of ribosome"/>
    <property type="evidence" value="ECO:0007669"/>
    <property type="project" value="InterPro"/>
</dbReference>
<dbReference type="GO" id="GO:0000049">
    <property type="term" value="F:tRNA binding"/>
    <property type="evidence" value="ECO:0007669"/>
    <property type="project" value="UniProtKB-UniRule"/>
</dbReference>
<dbReference type="GO" id="GO:0006412">
    <property type="term" value="P:translation"/>
    <property type="evidence" value="ECO:0007669"/>
    <property type="project" value="UniProtKB-UniRule"/>
</dbReference>
<dbReference type="FunFam" id="1.10.8.50:FF:000001">
    <property type="entry name" value="30S ribosomal protein S13"/>
    <property type="match status" value="1"/>
</dbReference>
<dbReference type="FunFam" id="4.10.910.10:FF:000001">
    <property type="entry name" value="30S ribosomal protein S13"/>
    <property type="match status" value="1"/>
</dbReference>
<dbReference type="Gene3D" id="1.10.8.50">
    <property type="match status" value="1"/>
</dbReference>
<dbReference type="Gene3D" id="4.10.910.10">
    <property type="entry name" value="30s ribosomal protein s13, domain 2"/>
    <property type="match status" value="1"/>
</dbReference>
<dbReference type="HAMAP" id="MF_01315">
    <property type="entry name" value="Ribosomal_uS13"/>
    <property type="match status" value="1"/>
</dbReference>
<dbReference type="InterPro" id="IPR027437">
    <property type="entry name" value="Rbsml_uS13_C"/>
</dbReference>
<dbReference type="InterPro" id="IPR001892">
    <property type="entry name" value="Ribosomal_uS13"/>
</dbReference>
<dbReference type="InterPro" id="IPR010979">
    <property type="entry name" value="Ribosomal_uS13-like_H2TH"/>
</dbReference>
<dbReference type="InterPro" id="IPR019980">
    <property type="entry name" value="Ribosomal_uS13_bac-type"/>
</dbReference>
<dbReference type="InterPro" id="IPR018269">
    <property type="entry name" value="Ribosomal_uS13_CS"/>
</dbReference>
<dbReference type="NCBIfam" id="TIGR03631">
    <property type="entry name" value="uS13_bact"/>
    <property type="match status" value="1"/>
</dbReference>
<dbReference type="PANTHER" id="PTHR10871">
    <property type="entry name" value="30S RIBOSOMAL PROTEIN S13/40S RIBOSOMAL PROTEIN S18"/>
    <property type="match status" value="1"/>
</dbReference>
<dbReference type="PANTHER" id="PTHR10871:SF1">
    <property type="entry name" value="SMALL RIBOSOMAL SUBUNIT PROTEIN US13M"/>
    <property type="match status" value="1"/>
</dbReference>
<dbReference type="Pfam" id="PF00416">
    <property type="entry name" value="Ribosomal_S13"/>
    <property type="match status" value="1"/>
</dbReference>
<dbReference type="PIRSF" id="PIRSF002134">
    <property type="entry name" value="Ribosomal_S13"/>
    <property type="match status" value="1"/>
</dbReference>
<dbReference type="SUPFAM" id="SSF46946">
    <property type="entry name" value="S13-like H2TH domain"/>
    <property type="match status" value="1"/>
</dbReference>
<dbReference type="PROSITE" id="PS00646">
    <property type="entry name" value="RIBOSOMAL_S13_1"/>
    <property type="match status" value="1"/>
</dbReference>
<dbReference type="PROSITE" id="PS50159">
    <property type="entry name" value="RIBOSOMAL_S13_2"/>
    <property type="match status" value="1"/>
</dbReference>
<protein>
    <recommendedName>
        <fullName evidence="1">Small ribosomal subunit protein uS13</fullName>
    </recommendedName>
    <alternativeName>
        <fullName evidence="3">30S ribosomal protein S13</fullName>
    </alternativeName>
</protein>
<evidence type="ECO:0000255" key="1">
    <source>
        <dbReference type="HAMAP-Rule" id="MF_01315"/>
    </source>
</evidence>
<evidence type="ECO:0000256" key="2">
    <source>
        <dbReference type="SAM" id="MobiDB-lite"/>
    </source>
</evidence>
<evidence type="ECO:0000305" key="3"/>
<accession>C0ZW51</accession>
<feature type="chain" id="PRO_1000214404" description="Small ribosomal subunit protein uS13">
    <location>
        <begin position="1"/>
        <end position="124"/>
    </location>
</feature>
<feature type="region of interest" description="Disordered" evidence="2">
    <location>
        <begin position="95"/>
        <end position="124"/>
    </location>
</feature>
<comment type="function">
    <text evidence="1">Located at the top of the head of the 30S subunit, it contacts several helices of the 16S rRNA. In the 70S ribosome it contacts the 23S rRNA (bridge B1a) and protein L5 of the 50S subunit (bridge B1b), connecting the 2 subunits; these bridges are implicated in subunit movement. Contacts the tRNAs in the A and P-sites.</text>
</comment>
<comment type="subunit">
    <text evidence="1">Part of the 30S ribosomal subunit. Forms a loose heterodimer with protein S19. Forms two bridges to the 50S subunit in the 70S ribosome.</text>
</comment>
<comment type="similarity">
    <text evidence="1">Belongs to the universal ribosomal protein uS13 family.</text>
</comment>
<name>RS13_RHOE4</name>
<keyword id="KW-0687">Ribonucleoprotein</keyword>
<keyword id="KW-0689">Ribosomal protein</keyword>
<keyword id="KW-0694">RNA-binding</keyword>
<keyword id="KW-0699">rRNA-binding</keyword>
<keyword id="KW-0820">tRNA-binding</keyword>
<gene>
    <name evidence="1" type="primary">rpsM</name>
    <name type="ordered locus">RER_18780</name>
</gene>
<proteinExistence type="inferred from homology"/>
<organism>
    <name type="scientific">Rhodococcus erythropolis (strain PR4 / NBRC 100887)</name>
    <dbReference type="NCBI Taxonomy" id="234621"/>
    <lineage>
        <taxon>Bacteria</taxon>
        <taxon>Bacillati</taxon>
        <taxon>Actinomycetota</taxon>
        <taxon>Actinomycetes</taxon>
        <taxon>Mycobacteriales</taxon>
        <taxon>Nocardiaceae</taxon>
        <taxon>Rhodococcus</taxon>
        <taxon>Rhodococcus erythropolis group</taxon>
    </lineage>
</organism>